<reference key="1">
    <citation type="journal article" date="2004" name="Proc. Natl. Acad. Sci. U.S.A.">
        <title>The diploid genome sequence of Candida albicans.</title>
        <authorList>
            <person name="Jones T."/>
            <person name="Federspiel N.A."/>
            <person name="Chibana H."/>
            <person name="Dungan J."/>
            <person name="Kalman S."/>
            <person name="Magee B.B."/>
            <person name="Newport G."/>
            <person name="Thorstenson Y.R."/>
            <person name="Agabian N."/>
            <person name="Magee P.T."/>
            <person name="Davis R.W."/>
            <person name="Scherer S."/>
        </authorList>
    </citation>
    <scope>NUCLEOTIDE SEQUENCE [LARGE SCALE GENOMIC DNA]</scope>
    <source>
        <strain>SC5314 / ATCC MYA-2876</strain>
    </source>
</reference>
<reference key="2">
    <citation type="journal article" date="2007" name="Genome Biol.">
        <title>Assembly of the Candida albicans genome into sixteen supercontigs aligned on the eight chromosomes.</title>
        <authorList>
            <person name="van het Hoog M."/>
            <person name="Rast T.J."/>
            <person name="Martchenko M."/>
            <person name="Grindle S."/>
            <person name="Dignard D."/>
            <person name="Hogues H."/>
            <person name="Cuomo C."/>
            <person name="Berriman M."/>
            <person name="Scherer S."/>
            <person name="Magee B.B."/>
            <person name="Whiteway M."/>
            <person name="Chibana H."/>
            <person name="Nantel A."/>
            <person name="Magee P.T."/>
        </authorList>
    </citation>
    <scope>GENOME REANNOTATION</scope>
    <source>
        <strain>SC5314 / ATCC MYA-2876</strain>
    </source>
</reference>
<reference key="3">
    <citation type="journal article" date="2013" name="Genome Biol.">
        <title>Assembly of a phased diploid Candida albicans genome facilitates allele-specific measurements and provides a simple model for repeat and indel structure.</title>
        <authorList>
            <person name="Muzzey D."/>
            <person name="Schwartz K."/>
            <person name="Weissman J.S."/>
            <person name="Sherlock G."/>
        </authorList>
    </citation>
    <scope>NUCLEOTIDE SEQUENCE [LARGE SCALE GENOMIC DNA]</scope>
    <scope>GENOME REANNOTATION</scope>
    <source>
        <strain>SC5314 / ATCC MYA-2876</strain>
    </source>
</reference>
<organism>
    <name type="scientific">Candida albicans (strain SC5314 / ATCC MYA-2876)</name>
    <name type="common">Yeast</name>
    <dbReference type="NCBI Taxonomy" id="237561"/>
    <lineage>
        <taxon>Eukaryota</taxon>
        <taxon>Fungi</taxon>
        <taxon>Dikarya</taxon>
        <taxon>Ascomycota</taxon>
        <taxon>Saccharomycotina</taxon>
        <taxon>Pichiomycetes</taxon>
        <taxon>Debaryomycetaceae</taxon>
        <taxon>Candida/Lodderomyces clade</taxon>
        <taxon>Candida</taxon>
    </lineage>
</organism>
<dbReference type="EC" id="3.4.21.89" evidence="1"/>
<dbReference type="EMBL" id="CP017630">
    <property type="protein sequence ID" value="AOW30861.1"/>
    <property type="molecule type" value="Genomic_DNA"/>
</dbReference>
<dbReference type="RefSeq" id="XP_717949.1">
    <property type="nucleotide sequence ID" value="XM_712856.1"/>
</dbReference>
<dbReference type="SMR" id="Q5A869"/>
<dbReference type="FunCoup" id="Q5A869">
    <property type="interactions" value="708"/>
</dbReference>
<dbReference type="STRING" id="237561.Q5A869"/>
<dbReference type="MEROPS" id="S26.010"/>
<dbReference type="EnsemblFungi" id="CR_00990W_A-T">
    <property type="protein sequence ID" value="CR_00990W_A-T-p1"/>
    <property type="gene ID" value="CR_00990W_A"/>
</dbReference>
<dbReference type="GeneID" id="3640425"/>
<dbReference type="KEGG" id="cal:CAALFM_CR00990WA"/>
<dbReference type="CGD" id="CAL0000184794">
    <property type="gene designation" value="orf19.10769"/>
</dbReference>
<dbReference type="VEuPathDB" id="FungiDB:CR_00990W_A"/>
<dbReference type="eggNOG" id="KOG3342">
    <property type="taxonomic scope" value="Eukaryota"/>
</dbReference>
<dbReference type="HOGENOM" id="CLU_089996_0_1_1"/>
<dbReference type="InParanoid" id="Q5A869"/>
<dbReference type="OMA" id="ILMNEYP"/>
<dbReference type="OrthoDB" id="10257561at2759"/>
<dbReference type="PRO" id="PR:Q5A869"/>
<dbReference type="Proteomes" id="UP000000559">
    <property type="component" value="Chromosome R"/>
</dbReference>
<dbReference type="GO" id="GO:0005787">
    <property type="term" value="C:signal peptidase complex"/>
    <property type="evidence" value="ECO:0000318"/>
    <property type="project" value="GO_Central"/>
</dbReference>
<dbReference type="GO" id="GO:0008233">
    <property type="term" value="F:peptidase activity"/>
    <property type="evidence" value="ECO:0000318"/>
    <property type="project" value="GO_Central"/>
</dbReference>
<dbReference type="GO" id="GO:0004252">
    <property type="term" value="F:serine-type endopeptidase activity"/>
    <property type="evidence" value="ECO:0007669"/>
    <property type="project" value="UniProtKB-EC"/>
</dbReference>
<dbReference type="GO" id="GO:0045047">
    <property type="term" value="P:protein targeting to ER"/>
    <property type="evidence" value="ECO:0007669"/>
    <property type="project" value="EnsemblFungi"/>
</dbReference>
<dbReference type="GO" id="GO:0006465">
    <property type="term" value="P:signal peptide processing"/>
    <property type="evidence" value="ECO:0000318"/>
    <property type="project" value="GO_Central"/>
</dbReference>
<dbReference type="CDD" id="cd06530">
    <property type="entry name" value="S26_SPase_I"/>
    <property type="match status" value="1"/>
</dbReference>
<dbReference type="InterPro" id="IPR036286">
    <property type="entry name" value="LexA/Signal_pep-like_sf"/>
</dbReference>
<dbReference type="InterPro" id="IPR019756">
    <property type="entry name" value="Pept_S26A_signal_pept_1_Ser-AS"/>
</dbReference>
<dbReference type="InterPro" id="IPR015927">
    <property type="entry name" value="Peptidase_S24_S26A/B/C"/>
</dbReference>
<dbReference type="InterPro" id="IPR019533">
    <property type="entry name" value="Peptidase_S26"/>
</dbReference>
<dbReference type="InterPro" id="IPR001733">
    <property type="entry name" value="Peptidase_S26B"/>
</dbReference>
<dbReference type="NCBIfam" id="TIGR02228">
    <property type="entry name" value="sigpep_I_arch"/>
    <property type="match status" value="1"/>
</dbReference>
<dbReference type="PANTHER" id="PTHR10806">
    <property type="entry name" value="SIGNAL PEPTIDASE COMPLEX CATALYTIC SUBUNIT SEC11"/>
    <property type="match status" value="1"/>
</dbReference>
<dbReference type="PANTHER" id="PTHR10806:SF6">
    <property type="entry name" value="SIGNAL PEPTIDASE COMPLEX CATALYTIC SUBUNIT SEC11"/>
    <property type="match status" value="1"/>
</dbReference>
<dbReference type="Pfam" id="PF00717">
    <property type="entry name" value="Peptidase_S24"/>
    <property type="match status" value="1"/>
</dbReference>
<dbReference type="PRINTS" id="PR00728">
    <property type="entry name" value="SIGNALPTASE"/>
</dbReference>
<dbReference type="SUPFAM" id="SSF51306">
    <property type="entry name" value="LexA/Signal peptidase"/>
    <property type="match status" value="1"/>
</dbReference>
<dbReference type="PROSITE" id="PS00501">
    <property type="entry name" value="SPASE_I_1"/>
    <property type="match status" value="1"/>
</dbReference>
<dbReference type="PROSITE" id="PS00761">
    <property type="entry name" value="SPASE_I_3"/>
    <property type="match status" value="1"/>
</dbReference>
<sequence>MNIRQQITQFLSLAYVFSSAFMLWKTLSVIANSHSPIVVVLSGSMEPAFQRGDILFLWNRDHQQKVGDIVVYEIDGKSIPIVHRVLREHHNSEKQLLLTKGDNNAVDDLSLYAKKQQYLNQKQDLVGTVKGYLPFIGYVTILISENVYFKYGMLGLLGLSSLFSNE</sequence>
<accession>Q5A869</accession>
<accession>A0A1D8PRV3</accession>
<name>SEC11_CANAL</name>
<comment type="function">
    <text evidence="1 2">Catalytic component of the signal peptidase complex (SPC) which catalyzes the cleavage of N-terminal signal sequences from nascent proteins as they are translocated into the lumen of the endoplasmic reticulum (By similarity). Specifically cleaves N-terminal signal peptides that contain a hydrophobic alpha-helix (h-region) shorter than 18-20 amino acids (By similarity).</text>
</comment>
<comment type="catalytic activity">
    <reaction evidence="1">
        <text>Cleavage of hydrophobic, N-terminal signal or leader sequences from secreted and periplasmic proteins.</text>
        <dbReference type="EC" id="3.4.21.89"/>
    </reaction>
</comment>
<comment type="subunit">
    <text evidence="1 2">Component of the signal peptidase complex (SPC) composed of a catalytic subunit SEC11 and three accessory subunits SPC1, SPC2 and SPC3 (By similarity). The complex induces a local thinning of the ER membrane which is used to measure the length of the signal peptide (SP) h-region of protein substrates. This ensures the selectivity of the complex towards h-regions shorter than 18-20 amino acids (By similarity). SPC associates with the translocon complex (By similarity).</text>
</comment>
<comment type="subcellular location">
    <subcellularLocation>
        <location evidence="1">Endoplasmic reticulum membrane</location>
        <topology evidence="1">Single-pass type II membrane protein</topology>
    </subcellularLocation>
</comment>
<comment type="domain">
    <text evidence="2">The C-terminal short (CTS) helix is essential for catalytic activity. It may be accommodated as a transmembrane helix in the thinned membrane environment of the complex, similarly to the signal peptide in the complex substrates.</text>
</comment>
<comment type="similarity">
    <text evidence="4">Belongs to the peptidase S26B family.</text>
</comment>
<proteinExistence type="inferred from homology"/>
<gene>
    <name type="primary">SEC11</name>
    <name type="ordered locus">CAALFM_CR00990WA</name>
    <name type="ORF">CaO19.10769</name>
    <name type="ORF">CaO19.3259</name>
</gene>
<evidence type="ECO:0000250" key="1">
    <source>
        <dbReference type="UniProtKB" id="P15367"/>
    </source>
</evidence>
<evidence type="ECO:0000250" key="2">
    <source>
        <dbReference type="UniProtKB" id="P67812"/>
    </source>
</evidence>
<evidence type="ECO:0000255" key="3"/>
<evidence type="ECO:0000305" key="4"/>
<feature type="chain" id="PRO_0000412320" description="Signal peptidase complex catalytic subunit SEC11">
    <location>
        <begin position="1"/>
        <end position="166"/>
    </location>
</feature>
<feature type="topological domain" description="Cytoplasmic" evidence="3">
    <location>
        <begin position="1"/>
        <end position="9"/>
    </location>
</feature>
<feature type="transmembrane region" description="Helical; Signal-anchor for type II membrane protein" evidence="3">
    <location>
        <begin position="10"/>
        <end position="30"/>
    </location>
</feature>
<feature type="topological domain" description="Lumenal" evidence="3">
    <location>
        <begin position="31"/>
        <end position="166"/>
    </location>
</feature>
<feature type="region of interest" description="C-terminal short (CTS) helix" evidence="2">
    <location>
        <begin position="152"/>
        <end position="163"/>
    </location>
</feature>
<feature type="active site" description="Charge relay system" evidence="1">
    <location>
        <position position="44"/>
    </location>
</feature>
<feature type="active site" description="Charge relay system" evidence="1">
    <location>
        <position position="83"/>
    </location>
</feature>
<feature type="active site" description="Charge relay system" evidence="1">
    <location>
        <position position="108"/>
    </location>
</feature>
<keyword id="KW-0256">Endoplasmic reticulum</keyword>
<keyword id="KW-0378">Hydrolase</keyword>
<keyword id="KW-0472">Membrane</keyword>
<keyword id="KW-0645">Protease</keyword>
<keyword id="KW-1185">Reference proteome</keyword>
<keyword id="KW-0735">Signal-anchor</keyword>
<keyword id="KW-0812">Transmembrane</keyword>
<keyword id="KW-1133">Transmembrane helix</keyword>
<protein>
    <recommendedName>
        <fullName>Signal peptidase complex catalytic subunit SEC11</fullName>
        <ecNumber evidence="1">3.4.21.89</ecNumber>
    </recommendedName>
    <alternativeName>
        <fullName>Signal peptidase I</fullName>
    </alternativeName>
</protein>